<accession>P07092</accession>
<dbReference type="EMBL" id="M17784">
    <property type="protein sequence ID" value="AAA41209.1"/>
    <property type="molecule type" value="mRNA"/>
</dbReference>
<dbReference type="PIR" id="B27496">
    <property type="entry name" value="B27496"/>
</dbReference>
<dbReference type="RefSeq" id="NP_062070.1">
    <property type="nucleotide sequence ID" value="NM_019197.1"/>
</dbReference>
<dbReference type="SMR" id="P07092"/>
<dbReference type="BioGRID" id="248020">
    <property type="interactions" value="2"/>
</dbReference>
<dbReference type="FunCoup" id="P07092">
    <property type="interactions" value="883"/>
</dbReference>
<dbReference type="IntAct" id="P07092">
    <property type="interactions" value="1"/>
</dbReference>
<dbReference type="STRING" id="10116.ENSRNOP00000020919"/>
<dbReference type="MEROPS" id="I04.021"/>
<dbReference type="GlyCosmos" id="P07092">
    <property type="glycosylation" value="1 site, No reported glycans"/>
</dbReference>
<dbReference type="GlyGen" id="P07092">
    <property type="glycosylation" value="1 site"/>
</dbReference>
<dbReference type="PhosphoSitePlus" id="P07092"/>
<dbReference type="PaxDb" id="10116-ENSRNOP00000020919"/>
<dbReference type="GeneID" id="29366"/>
<dbReference type="KEGG" id="rno:29366"/>
<dbReference type="UCSC" id="RGD:3748">
    <property type="organism name" value="rat"/>
</dbReference>
<dbReference type="AGR" id="RGD:3748"/>
<dbReference type="CTD" id="5270"/>
<dbReference type="RGD" id="3748">
    <property type="gene designation" value="Serpine2"/>
</dbReference>
<dbReference type="eggNOG" id="KOG2392">
    <property type="taxonomic scope" value="Eukaryota"/>
</dbReference>
<dbReference type="InParanoid" id="P07092"/>
<dbReference type="OrthoDB" id="11209at9989"/>
<dbReference type="PhylomeDB" id="P07092"/>
<dbReference type="Reactome" id="R-RNO-140837">
    <property type="pathway name" value="Intrinsic Pathway of Fibrin Clot Formation"/>
</dbReference>
<dbReference type="Reactome" id="R-RNO-140875">
    <property type="pathway name" value="Common Pathway of Fibrin Clot Formation"/>
</dbReference>
<dbReference type="Reactome" id="R-RNO-75205">
    <property type="pathway name" value="Dissolution of Fibrin Clot"/>
</dbReference>
<dbReference type="PRO" id="PR:P07092"/>
<dbReference type="Proteomes" id="UP000002494">
    <property type="component" value="Unplaced"/>
</dbReference>
<dbReference type="GO" id="GO:0005829">
    <property type="term" value="C:cytosol"/>
    <property type="evidence" value="ECO:0000266"/>
    <property type="project" value="RGD"/>
</dbReference>
<dbReference type="GO" id="GO:0005576">
    <property type="term" value="C:extracellular region"/>
    <property type="evidence" value="ECO:0000266"/>
    <property type="project" value="RGD"/>
</dbReference>
<dbReference type="GO" id="GO:0005615">
    <property type="term" value="C:extracellular space"/>
    <property type="evidence" value="ECO:0000314"/>
    <property type="project" value="RGD"/>
</dbReference>
<dbReference type="GO" id="GO:0031594">
    <property type="term" value="C:neuromuscular junction"/>
    <property type="evidence" value="ECO:0000266"/>
    <property type="project" value="RGD"/>
</dbReference>
<dbReference type="GO" id="GO:0043025">
    <property type="term" value="C:neuronal cell body"/>
    <property type="evidence" value="ECO:0000314"/>
    <property type="project" value="RGD"/>
</dbReference>
<dbReference type="GO" id="GO:0031091">
    <property type="term" value="C:platelet alpha granule"/>
    <property type="evidence" value="ECO:0000266"/>
    <property type="project" value="RGD"/>
</dbReference>
<dbReference type="GO" id="GO:0005539">
    <property type="term" value="F:glycosaminoglycan binding"/>
    <property type="evidence" value="ECO:0000266"/>
    <property type="project" value="RGD"/>
</dbReference>
<dbReference type="GO" id="GO:0008201">
    <property type="term" value="F:heparin binding"/>
    <property type="evidence" value="ECO:0000314"/>
    <property type="project" value="RGD"/>
</dbReference>
<dbReference type="GO" id="GO:0004867">
    <property type="term" value="F:serine-type endopeptidase inhibitor activity"/>
    <property type="evidence" value="ECO:0000314"/>
    <property type="project" value="RGD"/>
</dbReference>
<dbReference type="GO" id="GO:0005102">
    <property type="term" value="F:signaling receptor binding"/>
    <property type="evidence" value="ECO:0000266"/>
    <property type="project" value="RGD"/>
</dbReference>
<dbReference type="GO" id="GO:0007596">
    <property type="term" value="P:blood coagulation"/>
    <property type="evidence" value="ECO:0000266"/>
    <property type="project" value="RGD"/>
</dbReference>
<dbReference type="GO" id="GO:0030154">
    <property type="term" value="P:cell differentiation"/>
    <property type="evidence" value="ECO:0007669"/>
    <property type="project" value="UniProtKB-KW"/>
</dbReference>
<dbReference type="GO" id="GO:0021683">
    <property type="term" value="P:cerebellar granular layer morphogenesis"/>
    <property type="evidence" value="ECO:0000266"/>
    <property type="project" value="RGD"/>
</dbReference>
<dbReference type="GO" id="GO:0061110">
    <property type="term" value="P:dense core granule biogenesis"/>
    <property type="evidence" value="ECO:0000314"/>
    <property type="project" value="RGD"/>
</dbReference>
<dbReference type="GO" id="GO:0050974">
    <property type="term" value="P:detection of mechanical stimulus involved in sensory perception"/>
    <property type="evidence" value="ECO:0000266"/>
    <property type="project" value="RGD"/>
</dbReference>
<dbReference type="GO" id="GO:0007566">
    <property type="term" value="P:embryo implantation"/>
    <property type="evidence" value="ECO:0000270"/>
    <property type="project" value="RGD"/>
</dbReference>
<dbReference type="GO" id="GO:0060384">
    <property type="term" value="P:innervation"/>
    <property type="evidence" value="ECO:0000266"/>
    <property type="project" value="RGD"/>
</dbReference>
<dbReference type="GO" id="GO:0060291">
    <property type="term" value="P:long-term synaptic potentiation"/>
    <property type="evidence" value="ECO:0000266"/>
    <property type="project" value="RGD"/>
</dbReference>
<dbReference type="GO" id="GO:0042628">
    <property type="term" value="P:mating plug formation"/>
    <property type="evidence" value="ECO:0000266"/>
    <property type="project" value="RGD"/>
</dbReference>
<dbReference type="GO" id="GO:0030195">
    <property type="term" value="P:negative regulation of blood coagulation"/>
    <property type="evidence" value="ECO:0000314"/>
    <property type="project" value="BHF-UCL"/>
</dbReference>
<dbReference type="GO" id="GO:0030308">
    <property type="term" value="P:negative regulation of cell growth"/>
    <property type="evidence" value="ECO:0000266"/>
    <property type="project" value="RGD"/>
</dbReference>
<dbReference type="GO" id="GO:0008285">
    <property type="term" value="P:negative regulation of cell population proliferation"/>
    <property type="evidence" value="ECO:0000266"/>
    <property type="project" value="RGD"/>
</dbReference>
<dbReference type="GO" id="GO:0051898">
    <property type="term" value="P:negative regulation of phosphatidylinositol 3-kinase/protein kinase B signal transduction"/>
    <property type="evidence" value="ECO:0000266"/>
    <property type="project" value="RGD"/>
</dbReference>
<dbReference type="GO" id="GO:0010757">
    <property type="term" value="P:negative regulation of plasminogen activation"/>
    <property type="evidence" value="ECO:0000266"/>
    <property type="project" value="RGD"/>
</dbReference>
<dbReference type="GO" id="GO:0010544">
    <property type="term" value="P:negative regulation of platelet activation"/>
    <property type="evidence" value="ECO:0000266"/>
    <property type="project" value="RGD"/>
</dbReference>
<dbReference type="GO" id="GO:0090331">
    <property type="term" value="P:negative regulation of platelet aggregation"/>
    <property type="evidence" value="ECO:0000266"/>
    <property type="project" value="RGD"/>
</dbReference>
<dbReference type="GO" id="GO:0042177">
    <property type="term" value="P:negative regulation of protein catabolic process"/>
    <property type="evidence" value="ECO:0000266"/>
    <property type="project" value="RGD"/>
</dbReference>
<dbReference type="GO" id="GO:0045861">
    <property type="term" value="P:negative regulation of proteolysis"/>
    <property type="evidence" value="ECO:0000314"/>
    <property type="project" value="BHF-UCL"/>
</dbReference>
<dbReference type="GO" id="GO:0045879">
    <property type="term" value="P:negative regulation of smoothened signaling pathway"/>
    <property type="evidence" value="ECO:0000266"/>
    <property type="project" value="RGD"/>
</dbReference>
<dbReference type="GO" id="GO:0010766">
    <property type="term" value="P:negative regulation of sodium ion transport"/>
    <property type="evidence" value="ECO:0000266"/>
    <property type="project" value="RGD"/>
</dbReference>
<dbReference type="GO" id="GO:0030168">
    <property type="term" value="P:platelet activation"/>
    <property type="evidence" value="ECO:0000266"/>
    <property type="project" value="RGD"/>
</dbReference>
<dbReference type="GO" id="GO:0048711">
    <property type="term" value="P:positive regulation of astrocyte differentiation"/>
    <property type="evidence" value="ECO:0000266"/>
    <property type="project" value="RGD"/>
</dbReference>
<dbReference type="GO" id="GO:0010976">
    <property type="term" value="P:positive regulation of neuron projection development"/>
    <property type="evidence" value="ECO:0000314"/>
    <property type="project" value="RGD"/>
</dbReference>
<dbReference type="GO" id="GO:0030163">
    <property type="term" value="P:protein catabolic process"/>
    <property type="evidence" value="ECO:0000266"/>
    <property type="project" value="RGD"/>
</dbReference>
<dbReference type="GO" id="GO:0051966">
    <property type="term" value="P:regulation of synaptic transmission, glutamatergic"/>
    <property type="evidence" value="ECO:0000266"/>
    <property type="project" value="RGD"/>
</dbReference>
<dbReference type="GO" id="GO:0048505">
    <property type="term" value="P:regulation of timing of cell differentiation"/>
    <property type="evidence" value="ECO:0000266"/>
    <property type="project" value="RGD"/>
</dbReference>
<dbReference type="GO" id="GO:0009611">
    <property type="term" value="P:response to wounding"/>
    <property type="evidence" value="ECO:0000266"/>
    <property type="project" value="RGD"/>
</dbReference>
<dbReference type="GO" id="GO:0032940">
    <property type="term" value="P:secretion by cell"/>
    <property type="evidence" value="ECO:0000266"/>
    <property type="project" value="RGD"/>
</dbReference>
<dbReference type="GO" id="GO:0033363">
    <property type="term" value="P:secretory granule organization"/>
    <property type="evidence" value="ECO:0000314"/>
    <property type="project" value="RGD"/>
</dbReference>
<dbReference type="GO" id="GO:0061108">
    <property type="term" value="P:seminal vesicle epithelium development"/>
    <property type="evidence" value="ECO:0000266"/>
    <property type="project" value="RGD"/>
</dbReference>
<dbReference type="CDD" id="cd19573">
    <property type="entry name" value="serpinE2_GDN"/>
    <property type="match status" value="1"/>
</dbReference>
<dbReference type="FunFam" id="2.30.39.10:FF:000009">
    <property type="entry name" value="Glia-derived nexin isoform 2"/>
    <property type="match status" value="1"/>
</dbReference>
<dbReference type="FunFam" id="3.30.497.10:FF:000006">
    <property type="entry name" value="Plasminogen activator inhibitor 1"/>
    <property type="match status" value="1"/>
</dbReference>
<dbReference type="FunFam" id="2.30.39.10:FF:000035">
    <property type="entry name" value="Serine protease inhibitor (serpin) 16"/>
    <property type="match status" value="1"/>
</dbReference>
<dbReference type="FunFam" id="2.10.310.10:FF:000001">
    <property type="entry name" value="Serpin family A member 1"/>
    <property type="match status" value="1"/>
</dbReference>
<dbReference type="Gene3D" id="2.30.39.10">
    <property type="entry name" value="Alpha-1-antitrypsin, domain 1"/>
    <property type="match status" value="1"/>
</dbReference>
<dbReference type="Gene3D" id="3.30.497.10">
    <property type="entry name" value="Antithrombin, subunit I, domain 2"/>
    <property type="match status" value="1"/>
</dbReference>
<dbReference type="Gene3D" id="2.10.310.10">
    <property type="entry name" value="Serpins superfamily"/>
    <property type="match status" value="1"/>
</dbReference>
<dbReference type="InterPro" id="IPR023795">
    <property type="entry name" value="Serpin_CS"/>
</dbReference>
<dbReference type="InterPro" id="IPR023796">
    <property type="entry name" value="Serpin_dom"/>
</dbReference>
<dbReference type="InterPro" id="IPR000215">
    <property type="entry name" value="Serpin_fam"/>
</dbReference>
<dbReference type="InterPro" id="IPR036186">
    <property type="entry name" value="Serpin_sf"/>
</dbReference>
<dbReference type="InterPro" id="IPR042178">
    <property type="entry name" value="Serpin_sf_1"/>
</dbReference>
<dbReference type="InterPro" id="IPR042185">
    <property type="entry name" value="Serpin_sf_2"/>
</dbReference>
<dbReference type="PANTHER" id="PTHR11461:SF48">
    <property type="entry name" value="GLIA-DERIVED NEXIN"/>
    <property type="match status" value="1"/>
</dbReference>
<dbReference type="PANTHER" id="PTHR11461">
    <property type="entry name" value="SERINE PROTEASE INHIBITOR, SERPIN"/>
    <property type="match status" value="1"/>
</dbReference>
<dbReference type="Pfam" id="PF00079">
    <property type="entry name" value="Serpin"/>
    <property type="match status" value="1"/>
</dbReference>
<dbReference type="SMART" id="SM00093">
    <property type="entry name" value="SERPIN"/>
    <property type="match status" value="1"/>
</dbReference>
<dbReference type="SUPFAM" id="SSF56574">
    <property type="entry name" value="Serpins"/>
    <property type="match status" value="1"/>
</dbReference>
<dbReference type="PROSITE" id="PS00284">
    <property type="entry name" value="SERPIN"/>
    <property type="match status" value="1"/>
</dbReference>
<feature type="signal peptide" evidence="1">
    <location>
        <begin position="1"/>
        <end position="19"/>
    </location>
</feature>
<feature type="chain" id="PRO_0000032506" description="Glia-derived nexin">
    <location>
        <begin position="20"/>
        <end position="397"/>
    </location>
</feature>
<feature type="site" description="Reactive bond" evidence="2">
    <location>
        <begin position="364"/>
        <end position="365"/>
    </location>
</feature>
<feature type="glycosylation site" description="N-linked (GlcNAc...) asparagine" evidence="2">
    <location>
        <position position="159"/>
    </location>
</feature>
<gene>
    <name type="primary">Serpine2</name>
    <name type="synonym">Pi7</name>
    <name type="synonym">Pn1</name>
</gene>
<name>GDN_RAT</name>
<evidence type="ECO:0000250" key="1"/>
<evidence type="ECO:0000255" key="2"/>
<evidence type="ECO:0000269" key="3">
    <source>
    </source>
</evidence>
<evidence type="ECO:0000305" key="4"/>
<sequence length="397" mass="44063">MNWHFPFFILTTVTLSSVYSQLNSLSLEELGSDTGIQVFNQIIKSQPHENVVISPHGIASILGMLQLGADGRTKKQLSTVMRYNVNGVGKVLKKINKAIVSKKNKDIVTVANAVFVRNGFKVEVPFAARNKEVFQCEVQSVNFQDPASACDAINFWVKNETRGMIDNLLSPNLIDSALTKLVLVNAVYFKGLWKSRFQPENTKKRTFVAGDGKSYQVPMLAQLSVFRSGSTKTPNGLWYNFIELPYHGESISMLIALPTESSTPLSAIIPHISTKTINSWMNTMVPKRMQLVLPKFTALAQTDLKEPLKALGITEMFEPSKANFAKITRSESLHVSHILQKAKIEVSEDGTKAAVVTTAILIARSSPPWFIVDRPFLFCIRHNPTGAILFLGQVNKP</sequence>
<comment type="function">
    <text evidence="3">Serine protease inhibitor with activity toward thrombin, trypsin, and urokinase. Promotes neurite extension by inhibiting thrombin. Binds heparin.</text>
</comment>
<comment type="subcellular location">
    <subcellularLocation>
        <location>Secreted</location>
        <location>Extracellular space</location>
    </subcellularLocation>
</comment>
<comment type="similarity">
    <text evidence="4">Belongs to the serpin family.</text>
</comment>
<keyword id="KW-0217">Developmental protein</keyword>
<keyword id="KW-0221">Differentiation</keyword>
<keyword id="KW-0903">Direct protein sequencing</keyword>
<keyword id="KW-0325">Glycoprotein</keyword>
<keyword id="KW-0358">Heparin-binding</keyword>
<keyword id="KW-0524">Neurogenesis</keyword>
<keyword id="KW-0646">Protease inhibitor</keyword>
<keyword id="KW-1185">Reference proteome</keyword>
<keyword id="KW-0964">Secreted</keyword>
<keyword id="KW-0722">Serine protease inhibitor</keyword>
<keyword id="KW-0732">Signal</keyword>
<organism>
    <name type="scientific">Rattus norvegicus</name>
    <name type="common">Rat</name>
    <dbReference type="NCBI Taxonomy" id="10116"/>
    <lineage>
        <taxon>Eukaryota</taxon>
        <taxon>Metazoa</taxon>
        <taxon>Chordata</taxon>
        <taxon>Craniata</taxon>
        <taxon>Vertebrata</taxon>
        <taxon>Euteleostomi</taxon>
        <taxon>Mammalia</taxon>
        <taxon>Eutheria</taxon>
        <taxon>Euarchontoglires</taxon>
        <taxon>Glires</taxon>
        <taxon>Rodentia</taxon>
        <taxon>Myomorpha</taxon>
        <taxon>Muroidea</taxon>
        <taxon>Muridae</taxon>
        <taxon>Murinae</taxon>
        <taxon>Rattus</taxon>
    </lineage>
</organism>
<reference key="1">
    <citation type="journal article" date="1987" name="Biochemistry">
        <title>cDNA sequence coding for a rat glia-derived nexin and its homology to members of the serpin superfamily.</title>
        <authorList>
            <person name="Sommer J."/>
            <person name="Gloor S.M."/>
            <person name="Rovelli G.F."/>
            <person name="Hofsteenge J."/>
            <person name="Nick H."/>
            <person name="Meier R."/>
            <person name="Monard D."/>
        </authorList>
    </citation>
    <scope>NUCLEOTIDE SEQUENCE [MRNA]</scope>
</reference>
<reference key="2">
    <citation type="journal article" date="1992" name="Biochemistry">
        <title>Characterization of the heparin-binding site of glia-derived nexin/protease nexin-1.</title>
        <authorList>
            <person name="Rovelli G."/>
            <person name="Stone S.R."/>
            <person name="Guidolin A."/>
            <person name="Sommer J."/>
            <person name="Monard D."/>
        </authorList>
    </citation>
    <scope>PROTEIN SEQUENCE OF 82-96; 165-178 AND 317-333</scope>
    <scope>HEPARIN-BINDING</scope>
</reference>
<reference key="3">
    <citation type="journal article" date="1990" name="Biochemistry">
        <title>Functional sites of glia-derived nexin (GDN): importance of the site reacting with the protease.</title>
        <authorList>
            <person name="Nick H."/>
            <person name="Hofsteenge J."/>
            <person name="Shaw E."/>
            <person name="Rovelli G."/>
            <person name="Monard D."/>
        </authorList>
    </citation>
    <scope>PROTEIN SEQUENCE OF 133-153 AND 347-397</scope>
    <scope>FUNCTION</scope>
</reference>
<protein>
    <recommendedName>
        <fullName>Glia-derived nexin</fullName>
        <shortName>GDN</shortName>
    </recommendedName>
    <alternativeName>
        <fullName>Peptidase inhibitor 7</fullName>
        <shortName>PI-7</shortName>
    </alternativeName>
    <alternativeName>
        <fullName>Protease nexin 1</fullName>
        <shortName>PN-1</shortName>
    </alternativeName>
    <alternativeName>
        <fullName>Protease nexin I</fullName>
    </alternativeName>
    <alternativeName>
        <fullName>Serpin E2</fullName>
    </alternativeName>
</protein>
<proteinExistence type="evidence at protein level"/>